<reference key="1">
    <citation type="journal article" date="2013" name="J. Biol. Chem.">
        <title>Peroxisome proliferator-activated receptor gamma coactivator 1 (PGC-1)- and estrogen-related receptor (ERR)-induced regulator in muscle 1 (Perm1) is a tissue-specific regulator of oxidative capacity in skeletal muscle cells.</title>
        <authorList>
            <person name="Cho Y."/>
            <person name="Hazen B.C."/>
            <person name="Russell A.P."/>
            <person name="Kralli A."/>
        </authorList>
    </citation>
    <scope>NUCLEOTIDE SEQUENCE [MRNA] (ISOFORM 1)</scope>
    <scope>TISSUE SPECIFICITY</scope>
</reference>
<reference key="2">
    <citation type="journal article" date="2004" name="Nat. Genet.">
        <title>Complete sequencing and characterization of 21,243 full-length human cDNAs.</title>
        <authorList>
            <person name="Ota T."/>
            <person name="Suzuki Y."/>
            <person name="Nishikawa T."/>
            <person name="Otsuki T."/>
            <person name="Sugiyama T."/>
            <person name="Irie R."/>
            <person name="Wakamatsu A."/>
            <person name="Hayashi K."/>
            <person name="Sato H."/>
            <person name="Nagai K."/>
            <person name="Kimura K."/>
            <person name="Makita H."/>
            <person name="Sekine M."/>
            <person name="Obayashi M."/>
            <person name="Nishi T."/>
            <person name="Shibahara T."/>
            <person name="Tanaka T."/>
            <person name="Ishii S."/>
            <person name="Yamamoto J."/>
            <person name="Saito K."/>
            <person name="Kawai Y."/>
            <person name="Isono Y."/>
            <person name="Nakamura Y."/>
            <person name="Nagahari K."/>
            <person name="Murakami K."/>
            <person name="Yasuda T."/>
            <person name="Iwayanagi T."/>
            <person name="Wagatsuma M."/>
            <person name="Shiratori A."/>
            <person name="Sudo H."/>
            <person name="Hosoiri T."/>
            <person name="Kaku Y."/>
            <person name="Kodaira H."/>
            <person name="Kondo H."/>
            <person name="Sugawara M."/>
            <person name="Takahashi M."/>
            <person name="Kanda K."/>
            <person name="Yokoi T."/>
            <person name="Furuya T."/>
            <person name="Kikkawa E."/>
            <person name="Omura Y."/>
            <person name="Abe K."/>
            <person name="Kamihara K."/>
            <person name="Katsuta N."/>
            <person name="Sato K."/>
            <person name="Tanikawa M."/>
            <person name="Yamazaki M."/>
            <person name="Ninomiya K."/>
            <person name="Ishibashi T."/>
            <person name="Yamashita H."/>
            <person name="Murakawa K."/>
            <person name="Fujimori K."/>
            <person name="Tanai H."/>
            <person name="Kimata M."/>
            <person name="Watanabe M."/>
            <person name="Hiraoka S."/>
            <person name="Chiba Y."/>
            <person name="Ishida S."/>
            <person name="Ono Y."/>
            <person name="Takiguchi S."/>
            <person name="Watanabe S."/>
            <person name="Yosida M."/>
            <person name="Hotuta T."/>
            <person name="Kusano J."/>
            <person name="Kanehori K."/>
            <person name="Takahashi-Fujii A."/>
            <person name="Hara H."/>
            <person name="Tanase T.-O."/>
            <person name="Nomura Y."/>
            <person name="Togiya S."/>
            <person name="Komai F."/>
            <person name="Hara R."/>
            <person name="Takeuchi K."/>
            <person name="Arita M."/>
            <person name="Imose N."/>
            <person name="Musashino K."/>
            <person name="Yuuki H."/>
            <person name="Oshima A."/>
            <person name="Sasaki N."/>
            <person name="Aotsuka S."/>
            <person name="Yoshikawa Y."/>
            <person name="Matsunawa H."/>
            <person name="Ichihara T."/>
            <person name="Shiohata N."/>
            <person name="Sano S."/>
            <person name="Moriya S."/>
            <person name="Momiyama H."/>
            <person name="Satoh N."/>
            <person name="Takami S."/>
            <person name="Terashima Y."/>
            <person name="Suzuki O."/>
            <person name="Nakagawa S."/>
            <person name="Senoh A."/>
            <person name="Mizoguchi H."/>
            <person name="Goto Y."/>
            <person name="Shimizu F."/>
            <person name="Wakebe H."/>
            <person name="Hishigaki H."/>
            <person name="Watanabe T."/>
            <person name="Sugiyama A."/>
            <person name="Takemoto M."/>
            <person name="Kawakami B."/>
            <person name="Yamazaki M."/>
            <person name="Watanabe K."/>
            <person name="Kumagai A."/>
            <person name="Itakura S."/>
            <person name="Fukuzumi Y."/>
            <person name="Fujimori Y."/>
            <person name="Komiyama M."/>
            <person name="Tashiro H."/>
            <person name="Tanigami A."/>
            <person name="Fujiwara T."/>
            <person name="Ono T."/>
            <person name="Yamada K."/>
            <person name="Fujii Y."/>
            <person name="Ozaki K."/>
            <person name="Hirao M."/>
            <person name="Ohmori Y."/>
            <person name="Kawabata A."/>
            <person name="Hikiji T."/>
            <person name="Kobatake N."/>
            <person name="Inagaki H."/>
            <person name="Ikema Y."/>
            <person name="Okamoto S."/>
            <person name="Okitani R."/>
            <person name="Kawakami T."/>
            <person name="Noguchi S."/>
            <person name="Itoh T."/>
            <person name="Shigeta K."/>
            <person name="Senba T."/>
            <person name="Matsumura K."/>
            <person name="Nakajima Y."/>
            <person name="Mizuno T."/>
            <person name="Morinaga M."/>
            <person name="Sasaki M."/>
            <person name="Togashi T."/>
            <person name="Oyama M."/>
            <person name="Hata H."/>
            <person name="Watanabe M."/>
            <person name="Komatsu T."/>
            <person name="Mizushima-Sugano J."/>
            <person name="Satoh T."/>
            <person name="Shirai Y."/>
            <person name="Takahashi Y."/>
            <person name="Nakagawa K."/>
            <person name="Okumura K."/>
            <person name="Nagase T."/>
            <person name="Nomura N."/>
            <person name="Kikuchi H."/>
            <person name="Masuho Y."/>
            <person name="Yamashita R."/>
            <person name="Nakai K."/>
            <person name="Yada T."/>
            <person name="Nakamura Y."/>
            <person name="Ohara O."/>
            <person name="Isogai T."/>
            <person name="Sugano S."/>
        </authorList>
    </citation>
    <scope>NUCLEOTIDE SEQUENCE [LARGE SCALE MRNA] (ISOFORM 3)</scope>
    <source>
        <tissue>Tongue</tissue>
    </source>
</reference>
<reference key="3">
    <citation type="journal article" date="2006" name="Nature">
        <title>The DNA sequence and biological annotation of human chromosome 1.</title>
        <authorList>
            <person name="Gregory S.G."/>
            <person name="Barlow K.F."/>
            <person name="McLay K.E."/>
            <person name="Kaul R."/>
            <person name="Swarbreck D."/>
            <person name="Dunham A."/>
            <person name="Scott C.E."/>
            <person name="Howe K.L."/>
            <person name="Woodfine K."/>
            <person name="Spencer C.C.A."/>
            <person name="Jones M.C."/>
            <person name="Gillson C."/>
            <person name="Searle S."/>
            <person name="Zhou Y."/>
            <person name="Kokocinski F."/>
            <person name="McDonald L."/>
            <person name="Evans R."/>
            <person name="Phillips K."/>
            <person name="Atkinson A."/>
            <person name="Cooper R."/>
            <person name="Jones C."/>
            <person name="Hall R.E."/>
            <person name="Andrews T.D."/>
            <person name="Lloyd C."/>
            <person name="Ainscough R."/>
            <person name="Almeida J.P."/>
            <person name="Ambrose K.D."/>
            <person name="Anderson F."/>
            <person name="Andrew R.W."/>
            <person name="Ashwell R.I.S."/>
            <person name="Aubin K."/>
            <person name="Babbage A.K."/>
            <person name="Bagguley C.L."/>
            <person name="Bailey J."/>
            <person name="Beasley H."/>
            <person name="Bethel G."/>
            <person name="Bird C.P."/>
            <person name="Bray-Allen S."/>
            <person name="Brown J.Y."/>
            <person name="Brown A.J."/>
            <person name="Buckley D."/>
            <person name="Burton J."/>
            <person name="Bye J."/>
            <person name="Carder C."/>
            <person name="Chapman J.C."/>
            <person name="Clark S.Y."/>
            <person name="Clarke G."/>
            <person name="Clee C."/>
            <person name="Cobley V."/>
            <person name="Collier R.E."/>
            <person name="Corby N."/>
            <person name="Coville G.J."/>
            <person name="Davies J."/>
            <person name="Deadman R."/>
            <person name="Dunn M."/>
            <person name="Earthrowl M."/>
            <person name="Ellington A.G."/>
            <person name="Errington H."/>
            <person name="Frankish A."/>
            <person name="Frankland J."/>
            <person name="French L."/>
            <person name="Garner P."/>
            <person name="Garnett J."/>
            <person name="Gay L."/>
            <person name="Ghori M.R.J."/>
            <person name="Gibson R."/>
            <person name="Gilby L.M."/>
            <person name="Gillett W."/>
            <person name="Glithero R.J."/>
            <person name="Grafham D.V."/>
            <person name="Griffiths C."/>
            <person name="Griffiths-Jones S."/>
            <person name="Grocock R."/>
            <person name="Hammond S."/>
            <person name="Harrison E.S.I."/>
            <person name="Hart E."/>
            <person name="Haugen E."/>
            <person name="Heath P.D."/>
            <person name="Holmes S."/>
            <person name="Holt K."/>
            <person name="Howden P.J."/>
            <person name="Hunt A.R."/>
            <person name="Hunt S.E."/>
            <person name="Hunter G."/>
            <person name="Isherwood J."/>
            <person name="James R."/>
            <person name="Johnson C."/>
            <person name="Johnson D."/>
            <person name="Joy A."/>
            <person name="Kay M."/>
            <person name="Kershaw J.K."/>
            <person name="Kibukawa M."/>
            <person name="Kimberley A.M."/>
            <person name="King A."/>
            <person name="Knights A.J."/>
            <person name="Lad H."/>
            <person name="Laird G."/>
            <person name="Lawlor S."/>
            <person name="Leongamornlert D.A."/>
            <person name="Lloyd D.M."/>
            <person name="Loveland J."/>
            <person name="Lovell J."/>
            <person name="Lush M.J."/>
            <person name="Lyne R."/>
            <person name="Martin S."/>
            <person name="Mashreghi-Mohammadi M."/>
            <person name="Matthews L."/>
            <person name="Matthews N.S.W."/>
            <person name="McLaren S."/>
            <person name="Milne S."/>
            <person name="Mistry S."/>
            <person name="Moore M.J.F."/>
            <person name="Nickerson T."/>
            <person name="O'Dell C.N."/>
            <person name="Oliver K."/>
            <person name="Palmeiri A."/>
            <person name="Palmer S.A."/>
            <person name="Parker A."/>
            <person name="Patel D."/>
            <person name="Pearce A.V."/>
            <person name="Peck A.I."/>
            <person name="Pelan S."/>
            <person name="Phelps K."/>
            <person name="Phillimore B.J."/>
            <person name="Plumb R."/>
            <person name="Rajan J."/>
            <person name="Raymond C."/>
            <person name="Rouse G."/>
            <person name="Saenphimmachak C."/>
            <person name="Sehra H.K."/>
            <person name="Sheridan E."/>
            <person name="Shownkeen R."/>
            <person name="Sims S."/>
            <person name="Skuce C.D."/>
            <person name="Smith M."/>
            <person name="Steward C."/>
            <person name="Subramanian S."/>
            <person name="Sycamore N."/>
            <person name="Tracey A."/>
            <person name="Tromans A."/>
            <person name="Van Helmond Z."/>
            <person name="Wall M."/>
            <person name="Wallis J.M."/>
            <person name="White S."/>
            <person name="Whitehead S.L."/>
            <person name="Wilkinson J.E."/>
            <person name="Willey D.L."/>
            <person name="Williams H."/>
            <person name="Wilming L."/>
            <person name="Wray P.W."/>
            <person name="Wu Z."/>
            <person name="Coulson A."/>
            <person name="Vaudin M."/>
            <person name="Sulston J.E."/>
            <person name="Durbin R.M."/>
            <person name="Hubbard T."/>
            <person name="Wooster R."/>
            <person name="Dunham I."/>
            <person name="Carter N.P."/>
            <person name="McVean G."/>
            <person name="Ross M.T."/>
            <person name="Harrow J."/>
            <person name="Olson M.V."/>
            <person name="Beck S."/>
            <person name="Rogers J."/>
            <person name="Bentley D.R."/>
        </authorList>
    </citation>
    <scope>NUCLEOTIDE SEQUENCE [LARGE SCALE GENOMIC DNA]</scope>
</reference>
<reference key="4">
    <citation type="journal article" date="2004" name="Genome Res.">
        <title>The status, quality, and expansion of the NIH full-length cDNA project: the Mammalian Gene Collection (MGC).</title>
        <authorList>
            <consortium name="The MGC Project Team"/>
        </authorList>
    </citation>
    <scope>NUCLEOTIDE SEQUENCE [LARGE SCALE MRNA] (ISOFORM 2)</scope>
    <source>
        <tissue>Uterus</tissue>
    </source>
</reference>
<protein>
    <recommendedName>
        <fullName>PGC-1 and ERR-induced regulator in muscle protein 1</fullName>
    </recommendedName>
    <alternativeName>
        <fullName>PPARGC1 and ESRR-induced regulator in muscle 1</fullName>
    </alternativeName>
    <alternativeName>
        <fullName>Peroxisome proliferator-activated receptor gamma coactivator 1 and estrogen-related receptor-induced regulator in muscle 1</fullName>
    </alternativeName>
</protein>
<gene>
    <name type="primary">PERM1</name>
    <name type="synonym">C1orf170</name>
</gene>
<dbReference type="EMBL" id="KF150175">
    <property type="protein sequence ID" value="AGQ48858.1"/>
    <property type="molecule type" value="mRNA"/>
</dbReference>
<dbReference type="EMBL" id="AK123855">
    <property type="protein sequence ID" value="BAC85711.1"/>
    <property type="molecule type" value="mRNA"/>
</dbReference>
<dbReference type="EMBL" id="AL645608">
    <property type="status" value="NOT_ANNOTATED_CDS"/>
    <property type="molecule type" value="Genomic_DNA"/>
</dbReference>
<dbReference type="EMBL" id="BC006300">
    <property type="protein sequence ID" value="AAH06300.1"/>
    <property type="molecule type" value="mRNA"/>
</dbReference>
<dbReference type="CCDS" id="CCDS76083.1">
    <molecule id="Q5SV97-1"/>
</dbReference>
<dbReference type="CCDS" id="CCDS90836.1">
    <molecule id="Q5SV97-3"/>
</dbReference>
<dbReference type="RefSeq" id="NP_001278295.1">
    <molecule id="Q5SV97-1"/>
    <property type="nucleotide sequence ID" value="NM_001291366.2"/>
</dbReference>
<dbReference type="RefSeq" id="NP_001278296.2">
    <molecule id="Q5SV97-3"/>
    <property type="nucleotide sequence ID" value="NM_001291367.2"/>
</dbReference>
<dbReference type="RefSeq" id="NP_001356826.1">
    <molecule id="Q5SV97-1"/>
    <property type="nucleotide sequence ID" value="NM_001369897.1"/>
</dbReference>
<dbReference type="RefSeq" id="NP_001381642.1">
    <molecule id="Q5SV97-1"/>
    <property type="nucleotide sequence ID" value="NM_001394713.1"/>
</dbReference>
<dbReference type="RefSeq" id="XP_016858072.1">
    <property type="nucleotide sequence ID" value="XM_017002583.1"/>
</dbReference>
<dbReference type="RefSeq" id="XP_016858073.1">
    <property type="nucleotide sequence ID" value="XM_017002584.1"/>
</dbReference>
<dbReference type="BioGRID" id="124270">
    <property type="interactions" value="2"/>
</dbReference>
<dbReference type="FunCoup" id="Q5SV97">
    <property type="interactions" value="464"/>
</dbReference>
<dbReference type="STRING" id="9606.ENSP00000414022"/>
<dbReference type="iPTMnet" id="Q5SV97"/>
<dbReference type="PhosphoSitePlus" id="Q5SV97"/>
<dbReference type="BioMuta" id="PERM1"/>
<dbReference type="DMDM" id="158563938"/>
<dbReference type="MassIVE" id="Q5SV97"/>
<dbReference type="PaxDb" id="9606-ENSP00000414022"/>
<dbReference type="PeptideAtlas" id="Q5SV97"/>
<dbReference type="ProteomicsDB" id="63932">
    <molecule id="Q5SV97-1"/>
</dbReference>
<dbReference type="ProteomicsDB" id="63933">
    <molecule id="Q5SV97-2"/>
</dbReference>
<dbReference type="Antibodypedia" id="51128">
    <property type="antibodies" value="25 antibodies from 7 providers"/>
</dbReference>
<dbReference type="DNASU" id="84808"/>
<dbReference type="Ensembl" id="ENST00000341290.6">
    <molecule id="Q5SV97-3"/>
    <property type="protein sequence ID" value="ENSP00000343864.2"/>
    <property type="gene ID" value="ENSG00000187642.10"/>
</dbReference>
<dbReference type="Ensembl" id="ENST00000433179.4">
    <molecule id="Q5SV97-1"/>
    <property type="protein sequence ID" value="ENSP00000414022.3"/>
    <property type="gene ID" value="ENSG00000187642.10"/>
</dbReference>
<dbReference type="Ensembl" id="ENST00000694917.1">
    <molecule id="Q5SV97-1"/>
    <property type="protein sequence ID" value="ENSP00000511592.1"/>
    <property type="gene ID" value="ENSG00000187642.10"/>
</dbReference>
<dbReference type="GeneID" id="84808"/>
<dbReference type="KEGG" id="hsa:84808"/>
<dbReference type="MANE-Select" id="ENST00000433179.4">
    <property type="protein sequence ID" value="ENSP00000414022.3"/>
    <property type="RefSeq nucleotide sequence ID" value="NM_001394713.1"/>
    <property type="RefSeq protein sequence ID" value="NP_001381642.1"/>
</dbReference>
<dbReference type="UCSC" id="uc001ach.3">
    <molecule id="Q5SV97-1"/>
    <property type="organism name" value="human"/>
</dbReference>
<dbReference type="AGR" id="HGNC:28208"/>
<dbReference type="CTD" id="84808"/>
<dbReference type="DisGeNET" id="84808"/>
<dbReference type="GeneCards" id="PERM1"/>
<dbReference type="HGNC" id="HGNC:28208">
    <property type="gene designation" value="PERM1"/>
</dbReference>
<dbReference type="HPA" id="ENSG00000187642">
    <property type="expression patterns" value="Group enriched (heart muscle, skeletal muscle, tongue)"/>
</dbReference>
<dbReference type="MalaCards" id="PERM1"/>
<dbReference type="MIM" id="615921">
    <property type="type" value="gene"/>
</dbReference>
<dbReference type="neXtProt" id="NX_Q5SV97"/>
<dbReference type="OpenTargets" id="ENSG00000187642"/>
<dbReference type="VEuPathDB" id="HostDB:ENSG00000187642"/>
<dbReference type="eggNOG" id="ENOG502RYI7">
    <property type="taxonomic scope" value="Eukaryota"/>
</dbReference>
<dbReference type="GeneTree" id="ENSGT00390000017652"/>
<dbReference type="HOGENOM" id="CLU_015049_1_0_1"/>
<dbReference type="InParanoid" id="Q5SV97"/>
<dbReference type="OMA" id="EVQWPDT"/>
<dbReference type="OrthoDB" id="8943218at2759"/>
<dbReference type="PAN-GO" id="Q5SV97">
    <property type="GO annotations" value="4 GO annotations based on evolutionary models"/>
</dbReference>
<dbReference type="TreeFam" id="TF338365"/>
<dbReference type="PathwayCommons" id="Q5SV97"/>
<dbReference type="Reactome" id="R-HSA-2151201">
    <property type="pathway name" value="Transcriptional activation of mitochondrial biogenesis"/>
</dbReference>
<dbReference type="BioGRID-ORCS" id="84808">
    <property type="hits" value="21 hits in 230 CRISPR screens"/>
</dbReference>
<dbReference type="ChiTaRS" id="PERM1">
    <property type="organism name" value="human"/>
</dbReference>
<dbReference type="GenomeRNAi" id="84808"/>
<dbReference type="Pharos" id="Q5SV97">
    <property type="development level" value="Tdark"/>
</dbReference>
<dbReference type="PRO" id="PR:Q5SV97"/>
<dbReference type="Proteomes" id="UP000005640">
    <property type="component" value="Chromosome 1"/>
</dbReference>
<dbReference type="RNAct" id="Q5SV97">
    <property type="molecule type" value="protein"/>
</dbReference>
<dbReference type="Bgee" id="ENSG00000187642">
    <property type="expression patterns" value="Expressed in apex of heart and 128 other cell types or tissues"/>
</dbReference>
<dbReference type="GO" id="GO:0005737">
    <property type="term" value="C:cytoplasm"/>
    <property type="evidence" value="ECO:0000250"/>
    <property type="project" value="UniProtKB"/>
</dbReference>
<dbReference type="GO" id="GO:0005634">
    <property type="term" value="C:nucleus"/>
    <property type="evidence" value="ECO:0000250"/>
    <property type="project" value="UniProtKB"/>
</dbReference>
<dbReference type="GO" id="GO:0006355">
    <property type="term" value="P:regulation of DNA-templated transcription"/>
    <property type="evidence" value="ECO:0000250"/>
    <property type="project" value="UniProtKB"/>
</dbReference>
<dbReference type="GO" id="GO:0014850">
    <property type="term" value="P:response to muscle activity"/>
    <property type="evidence" value="ECO:0000314"/>
    <property type="project" value="UniProtKB"/>
</dbReference>
<dbReference type="InterPro" id="IPR043442">
    <property type="entry name" value="Perm1"/>
</dbReference>
<dbReference type="PANTHER" id="PTHR47282">
    <property type="entry name" value="PGC-1 AND ERR-INDUCED REGULATOR IN MUSCLE PROTEIN 1"/>
    <property type="match status" value="1"/>
</dbReference>
<dbReference type="PANTHER" id="PTHR47282:SF1">
    <property type="entry name" value="PGC-1 AND ERR-INDUCED REGULATOR IN MUSCLE PROTEIN 1"/>
    <property type="match status" value="1"/>
</dbReference>
<comment type="function">
    <text evidence="1">Regulates the expression of selective PPARGC1A/B and ESRRA/B/G target genes with roles in glucose and lipid metabolism, energy transfer, contractile function, muscle mitochondrial biogenesis and oxidative capacity. Required for the efficient induction of MT-CO2, MT-CO3, COX4I1, TFB1M, TFB2M, POLRMT and SIRT3 by PPARGC1A. Positively regulates the PPARGC1A/ESRRG-induced expression of CKMT2, TNNI3 and SLC2A4 and negatively regulates the PPARGC1A/ESRRG-induced expression of PDK4.</text>
</comment>
<comment type="subcellular location">
    <subcellularLocation>
        <location evidence="1">Cytoplasm</location>
    </subcellularLocation>
    <subcellularLocation>
        <location evidence="1">Nucleus</location>
    </subcellularLocation>
    <text evidence="1">Shows a nuclear localization in the presence of PPARGC1A.</text>
</comment>
<comment type="alternative products">
    <event type="alternative splicing"/>
    <isoform>
        <id>Q5SV97-1</id>
        <name>1</name>
        <sequence type="displayed"/>
    </isoform>
    <isoform>
        <id>Q5SV97-2</id>
        <name>2</name>
        <sequence type="described" ref="VSP_027731"/>
    </isoform>
    <isoform>
        <id>Q5SV97-3</id>
        <name>3</name>
        <sequence type="described" ref="VSP_053677"/>
    </isoform>
</comment>
<comment type="tissue specificity">
    <text evidence="3">Muscle-specific expression is increased by endurance exercise.</text>
</comment>
<evidence type="ECO:0000250" key="1">
    <source>
        <dbReference type="UniProtKB" id="Q149B8"/>
    </source>
</evidence>
<evidence type="ECO:0000256" key="2">
    <source>
        <dbReference type="SAM" id="MobiDB-lite"/>
    </source>
</evidence>
<evidence type="ECO:0000269" key="3">
    <source>
    </source>
</evidence>
<evidence type="ECO:0000303" key="4">
    <source>
    </source>
</evidence>
<evidence type="ECO:0000303" key="5">
    <source>
    </source>
</evidence>
<evidence type="ECO:0000305" key="6"/>
<keyword id="KW-0025">Alternative splicing</keyword>
<keyword id="KW-0963">Cytoplasm</keyword>
<keyword id="KW-0539">Nucleus</keyword>
<keyword id="KW-1267">Proteomics identification</keyword>
<keyword id="KW-1185">Reference proteome</keyword>
<keyword id="KW-0804">Transcription</keyword>
<keyword id="KW-0805">Transcription regulation</keyword>
<proteinExistence type="evidence at protein level"/>
<organism>
    <name type="scientific">Homo sapiens</name>
    <name type="common">Human</name>
    <dbReference type="NCBI Taxonomy" id="9606"/>
    <lineage>
        <taxon>Eukaryota</taxon>
        <taxon>Metazoa</taxon>
        <taxon>Chordata</taxon>
        <taxon>Craniata</taxon>
        <taxon>Vertebrata</taxon>
        <taxon>Euteleostomi</taxon>
        <taxon>Mammalia</taxon>
        <taxon>Eutheria</taxon>
        <taxon>Euarchontoglires</taxon>
        <taxon>Primates</taxon>
        <taxon>Haplorrhini</taxon>
        <taxon>Catarrhini</taxon>
        <taxon>Hominidae</taxon>
        <taxon>Homo</taxon>
    </lineage>
</organism>
<sequence length="790" mass="81351">MENFQYSVQLSDQDWAEFSATADECGLLQAGLASGDELLSSDIDQGDSSGSSPPRAPPLPTGQLAAGGRSRRGCEEEDVATQQPVSRSQGEPVLALGTGQQTPSTSARAEAPPSLGPGASPPSQFSSCPGPASSGDQMQRLLQGPAPRPPGEPPGSPKSPGHSTGSQRPPDSPGAPPRSPSRKKRRAVGAKGGGHTGASASAQTGSPLLPAASPETAKLMAKAGQEELGPGPAGAPEPGPRSPVQEDRPGPGLGLSTPVPVTEQGTDQIRTPRRAKLHTVSTTVWEALPDVSRAKSDMAVSTPASEPQPDRDMAVSTPASEPQSDRDMAVSTPASEPQPDTDMAVSTPASEPQPDRDMAVSIPASKPQSDTAVSTPASEPQSSVALSTPISKPQLDTDVAVSTPASKHGLDVALPTAGPVAKLEVASSPPVSEAVPRMTESSGLVSTPVPRADAAGLAWPPTRRAGPDVVEMEAVVSEPSAGAPGCCSGAPALGLTQVPRKKKVRFSVAGPSPNKPGSGQASARPSAPQTATGAHGGPGAWEAVAVGPRPHQPRILKHLPRPPPSAVTRVGPGSSFAVTLPEAYEFFFCDTIEENEEAEAAAAGQDPAGVQWPDMCEFFFPDVGAQRSRRRGSPEPLPRADPVPAPIPGDPVPISIPEVYEHFFFGEDRLEGVLGPAVPLPLQALEPPRSASEGAGPGTPLKPAVVERLHLALRRAGELRGPVPSFAFSQNDMCLVFVAFATWAVRTSDPHTPDAWKTALLANVGTISAIRYFRRQVGQGRRSHSPSPSS</sequence>
<name>PERM1_HUMAN</name>
<feature type="chain" id="PRO_0000299540" description="PGC-1 and ERR-induced regulator in muscle protein 1">
    <location>
        <begin position="1"/>
        <end position="790"/>
    </location>
</feature>
<feature type="region of interest" description="Disordered" evidence="2">
    <location>
        <begin position="38"/>
        <end position="391"/>
    </location>
</feature>
<feature type="region of interest" description="Disordered" evidence="2">
    <location>
        <begin position="425"/>
        <end position="449"/>
    </location>
</feature>
<feature type="region of interest" description="Disordered" evidence="2">
    <location>
        <begin position="507"/>
        <end position="545"/>
    </location>
</feature>
<feature type="region of interest" description="Disordered" evidence="2">
    <location>
        <begin position="626"/>
        <end position="648"/>
    </location>
</feature>
<feature type="compositionally biased region" description="Low complexity" evidence="2">
    <location>
        <begin position="40"/>
        <end position="52"/>
    </location>
</feature>
<feature type="compositionally biased region" description="Polar residues" evidence="2">
    <location>
        <begin position="80"/>
        <end position="89"/>
    </location>
</feature>
<feature type="compositionally biased region" description="Polar residues" evidence="2">
    <location>
        <begin position="98"/>
        <end position="107"/>
    </location>
</feature>
<feature type="compositionally biased region" description="Low complexity" evidence="2">
    <location>
        <begin position="111"/>
        <end position="123"/>
    </location>
</feature>
<feature type="compositionally biased region" description="Pro residues" evidence="2">
    <location>
        <begin position="146"/>
        <end position="157"/>
    </location>
</feature>
<feature type="compositionally biased region" description="Low complexity" evidence="2">
    <location>
        <begin position="158"/>
        <end position="169"/>
    </location>
</feature>
<feature type="compositionally biased region" description="Pro residues" evidence="2">
    <location>
        <begin position="170"/>
        <end position="179"/>
    </location>
</feature>
<feature type="compositionally biased region" description="Polar residues" evidence="2">
    <location>
        <begin position="366"/>
        <end position="391"/>
    </location>
</feature>
<feature type="compositionally biased region" description="Polar residues" evidence="2">
    <location>
        <begin position="515"/>
        <end position="532"/>
    </location>
</feature>
<feature type="compositionally biased region" description="Pro residues" evidence="2">
    <location>
        <begin position="635"/>
        <end position="648"/>
    </location>
</feature>
<feature type="splice variant" id="VSP_027731" description="In isoform 2." evidence="5">
    <location>
        <begin position="1"/>
        <end position="732"/>
    </location>
</feature>
<feature type="splice variant" id="VSP_053677" description="In isoform 3." evidence="4">
    <original>MENFQYSVQLSDQDWAEFSATADECGLLQAGLASGDELLSSDIDQGDSSGSSPPRAPPLPTGQLAAGGRSRRGCEEEDVATQQPVSRSQGEPVLALGTGQQTPSTSARAEAPPSLGPGASPP</original>
    <variation>MEPRGGGS</variation>
    <location>
        <begin position="1"/>
        <end position="122"/>
    </location>
</feature>
<feature type="sequence conflict" description="In Ref. 2; BAC85711." evidence="6" ref="2">
    <original>S</original>
    <variation>G</variation>
    <location>
        <position position="512"/>
    </location>
</feature>
<feature type="sequence conflict" description="In Ref. 2; BAC85711." evidence="6" ref="2">
    <original>P</original>
    <variation>L</variation>
    <location>
        <position position="528"/>
    </location>
</feature>
<feature type="sequence conflict" description="In Ref. 2; BAC85711." evidence="6" ref="2">
    <original>M</original>
    <variation>I</variation>
    <location>
        <position position="615"/>
    </location>
</feature>
<feature type="sequence conflict" description="In Ref. 2; BAC85711." evidence="6" ref="2">
    <original>F</original>
    <variation>S</variation>
    <location>
        <position position="726"/>
    </location>
</feature>
<feature type="sequence conflict" description="In Ref. 1; AGQ48858 and 4; AAH06300." evidence="6" ref="1 4">
    <original>V</original>
    <variation>A</variation>
    <location>
        <position position="777"/>
    </location>
</feature>
<accession>Q5SV97</accession>
<accession>Q6ZVZ7</accession>
<accession>Q9BRF2</accession>
<accession>S5G239</accession>